<feature type="chain" id="PRO_1000068911" description="Phosphoglucosamine mutase">
    <location>
        <begin position="1"/>
        <end position="445"/>
    </location>
</feature>
<feature type="active site" description="Phosphoserine intermediate" evidence="1">
    <location>
        <position position="101"/>
    </location>
</feature>
<feature type="binding site" description="via phosphate group" evidence="1">
    <location>
        <position position="101"/>
    </location>
    <ligand>
        <name>Mg(2+)</name>
        <dbReference type="ChEBI" id="CHEBI:18420"/>
    </ligand>
</feature>
<feature type="binding site" evidence="1">
    <location>
        <position position="240"/>
    </location>
    <ligand>
        <name>Mg(2+)</name>
        <dbReference type="ChEBI" id="CHEBI:18420"/>
    </ligand>
</feature>
<feature type="binding site" evidence="1">
    <location>
        <position position="242"/>
    </location>
    <ligand>
        <name>Mg(2+)</name>
        <dbReference type="ChEBI" id="CHEBI:18420"/>
    </ligand>
</feature>
<feature type="binding site" evidence="1">
    <location>
        <position position="244"/>
    </location>
    <ligand>
        <name>Mg(2+)</name>
        <dbReference type="ChEBI" id="CHEBI:18420"/>
    </ligand>
</feature>
<feature type="modified residue" description="Phosphoserine" evidence="1">
    <location>
        <position position="101"/>
    </location>
</feature>
<proteinExistence type="inferred from homology"/>
<gene>
    <name evidence="1" type="primary">glmM</name>
    <name type="ordered locus">Pmen_3613</name>
</gene>
<protein>
    <recommendedName>
        <fullName evidence="1">Phosphoglucosamine mutase</fullName>
        <ecNumber evidence="1">5.4.2.10</ecNumber>
    </recommendedName>
</protein>
<keyword id="KW-0413">Isomerase</keyword>
<keyword id="KW-0460">Magnesium</keyword>
<keyword id="KW-0479">Metal-binding</keyword>
<keyword id="KW-0597">Phosphoprotein</keyword>
<accession>A4XYE5</accession>
<sequence length="445" mass="47625">MARKYFGTDGIRGRVGQFPITPDFMLKLGWAAGMAFRKEGKCRILIGKDTRISGYMFESALEAGLAAAGADVQLLGPMPTPAIAYLTRTFQADAGIVISASHNPHDDNGIKFFSNEGTKLPDDVEAMIEELLDQPMTVVESAGIGKASRINDASGRYIEFCKGSVPSGTSFKGLKIVIDCAHGAAYKVAPSVFRELGAEVRVISAQPDGLNINDGCGSTHIAALQAEVVAQQADLGIAFDGDADRVLMVDQYGAVVDGDELLFIIARDLQERGRLRGGVVGTLMSNLGLELALAELNIPFVRAKVGDRYVIAELLARNWQLGGENSGHLVCFQHTTTGDAIIAALQVLMALKRRGQSLVEARSDLKKCPQVLVNVRLSGAVDPLEHPSVKEACARVTERMAGRGRVLLRKSGTEPLVRVMVEGDEESSVRGYADELAKIVAEVCA</sequence>
<evidence type="ECO:0000255" key="1">
    <source>
        <dbReference type="HAMAP-Rule" id="MF_01554"/>
    </source>
</evidence>
<comment type="function">
    <text evidence="1">Catalyzes the conversion of glucosamine-6-phosphate to glucosamine-1-phosphate.</text>
</comment>
<comment type="catalytic activity">
    <reaction evidence="1">
        <text>alpha-D-glucosamine 1-phosphate = D-glucosamine 6-phosphate</text>
        <dbReference type="Rhea" id="RHEA:23424"/>
        <dbReference type="ChEBI" id="CHEBI:58516"/>
        <dbReference type="ChEBI" id="CHEBI:58725"/>
        <dbReference type="EC" id="5.4.2.10"/>
    </reaction>
</comment>
<comment type="cofactor">
    <cofactor evidence="1">
        <name>Mg(2+)</name>
        <dbReference type="ChEBI" id="CHEBI:18420"/>
    </cofactor>
    <text evidence="1">Binds 1 Mg(2+) ion per subunit.</text>
</comment>
<comment type="PTM">
    <text evidence="1">Activated by phosphorylation.</text>
</comment>
<comment type="similarity">
    <text evidence="1">Belongs to the phosphohexose mutase family.</text>
</comment>
<reference key="1">
    <citation type="submission" date="2007-04" db="EMBL/GenBank/DDBJ databases">
        <title>Complete sequence of Pseudomonas mendocina ymp.</title>
        <authorList>
            <consortium name="US DOE Joint Genome Institute"/>
            <person name="Copeland A."/>
            <person name="Lucas S."/>
            <person name="Lapidus A."/>
            <person name="Barry K."/>
            <person name="Glavina del Rio T."/>
            <person name="Dalin E."/>
            <person name="Tice H."/>
            <person name="Pitluck S."/>
            <person name="Kiss H."/>
            <person name="Brettin T."/>
            <person name="Detter J.C."/>
            <person name="Bruce D."/>
            <person name="Han C."/>
            <person name="Schmutz J."/>
            <person name="Larimer F."/>
            <person name="Land M."/>
            <person name="Hauser L."/>
            <person name="Kyrpides N."/>
            <person name="Mikhailova N."/>
            <person name="Hersman L."/>
            <person name="Dubois J."/>
            <person name="Maurice P."/>
            <person name="Richardson P."/>
        </authorList>
    </citation>
    <scope>NUCLEOTIDE SEQUENCE [LARGE SCALE GENOMIC DNA]</scope>
    <source>
        <strain>ymp</strain>
    </source>
</reference>
<dbReference type="EC" id="5.4.2.10" evidence="1"/>
<dbReference type="EMBL" id="CP000680">
    <property type="protein sequence ID" value="ABP86361.1"/>
    <property type="molecule type" value="Genomic_DNA"/>
</dbReference>
<dbReference type="SMR" id="A4XYE5"/>
<dbReference type="STRING" id="399739.Pmen_3613"/>
<dbReference type="KEGG" id="pmy:Pmen_3613"/>
<dbReference type="PATRIC" id="fig|399739.8.peg.3662"/>
<dbReference type="eggNOG" id="COG1109">
    <property type="taxonomic scope" value="Bacteria"/>
</dbReference>
<dbReference type="HOGENOM" id="CLU_016950_7_0_6"/>
<dbReference type="OrthoDB" id="9803322at2"/>
<dbReference type="GO" id="GO:0005829">
    <property type="term" value="C:cytosol"/>
    <property type="evidence" value="ECO:0007669"/>
    <property type="project" value="TreeGrafter"/>
</dbReference>
<dbReference type="GO" id="GO:0000287">
    <property type="term" value="F:magnesium ion binding"/>
    <property type="evidence" value="ECO:0007669"/>
    <property type="project" value="UniProtKB-UniRule"/>
</dbReference>
<dbReference type="GO" id="GO:0008966">
    <property type="term" value="F:phosphoglucosamine mutase activity"/>
    <property type="evidence" value="ECO:0007669"/>
    <property type="project" value="UniProtKB-UniRule"/>
</dbReference>
<dbReference type="GO" id="GO:0004615">
    <property type="term" value="F:phosphomannomutase activity"/>
    <property type="evidence" value="ECO:0007669"/>
    <property type="project" value="TreeGrafter"/>
</dbReference>
<dbReference type="GO" id="GO:0005975">
    <property type="term" value="P:carbohydrate metabolic process"/>
    <property type="evidence" value="ECO:0007669"/>
    <property type="project" value="InterPro"/>
</dbReference>
<dbReference type="GO" id="GO:0009252">
    <property type="term" value="P:peptidoglycan biosynthetic process"/>
    <property type="evidence" value="ECO:0007669"/>
    <property type="project" value="TreeGrafter"/>
</dbReference>
<dbReference type="GO" id="GO:0006048">
    <property type="term" value="P:UDP-N-acetylglucosamine biosynthetic process"/>
    <property type="evidence" value="ECO:0007669"/>
    <property type="project" value="TreeGrafter"/>
</dbReference>
<dbReference type="CDD" id="cd05802">
    <property type="entry name" value="GlmM"/>
    <property type="match status" value="1"/>
</dbReference>
<dbReference type="FunFam" id="3.30.310.50:FF:000001">
    <property type="entry name" value="Phosphoglucosamine mutase"/>
    <property type="match status" value="1"/>
</dbReference>
<dbReference type="FunFam" id="3.40.120.10:FF:000001">
    <property type="entry name" value="Phosphoglucosamine mutase"/>
    <property type="match status" value="1"/>
</dbReference>
<dbReference type="FunFam" id="3.40.120.10:FF:000003">
    <property type="entry name" value="Phosphoglucosamine mutase"/>
    <property type="match status" value="1"/>
</dbReference>
<dbReference type="Gene3D" id="3.40.120.10">
    <property type="entry name" value="Alpha-D-Glucose-1,6-Bisphosphate, subunit A, domain 3"/>
    <property type="match status" value="3"/>
</dbReference>
<dbReference type="Gene3D" id="3.30.310.50">
    <property type="entry name" value="Alpha-D-phosphohexomutase, C-terminal domain"/>
    <property type="match status" value="1"/>
</dbReference>
<dbReference type="HAMAP" id="MF_01554_B">
    <property type="entry name" value="GlmM_B"/>
    <property type="match status" value="1"/>
</dbReference>
<dbReference type="InterPro" id="IPR005844">
    <property type="entry name" value="A-D-PHexomutase_a/b/a-I"/>
</dbReference>
<dbReference type="InterPro" id="IPR016055">
    <property type="entry name" value="A-D-PHexomutase_a/b/a-I/II/III"/>
</dbReference>
<dbReference type="InterPro" id="IPR005845">
    <property type="entry name" value="A-D-PHexomutase_a/b/a-II"/>
</dbReference>
<dbReference type="InterPro" id="IPR005846">
    <property type="entry name" value="A-D-PHexomutase_a/b/a-III"/>
</dbReference>
<dbReference type="InterPro" id="IPR005843">
    <property type="entry name" value="A-D-PHexomutase_C"/>
</dbReference>
<dbReference type="InterPro" id="IPR036900">
    <property type="entry name" value="A-D-PHexomutase_C_sf"/>
</dbReference>
<dbReference type="InterPro" id="IPR016066">
    <property type="entry name" value="A-D-PHexomutase_CS"/>
</dbReference>
<dbReference type="InterPro" id="IPR005841">
    <property type="entry name" value="Alpha-D-phosphohexomutase_SF"/>
</dbReference>
<dbReference type="InterPro" id="IPR006352">
    <property type="entry name" value="GlmM_bact"/>
</dbReference>
<dbReference type="InterPro" id="IPR050060">
    <property type="entry name" value="Phosphoglucosamine_mutase"/>
</dbReference>
<dbReference type="NCBIfam" id="TIGR01455">
    <property type="entry name" value="glmM"/>
    <property type="match status" value="1"/>
</dbReference>
<dbReference type="NCBIfam" id="NF008139">
    <property type="entry name" value="PRK10887.1"/>
    <property type="match status" value="1"/>
</dbReference>
<dbReference type="PANTHER" id="PTHR42946:SF1">
    <property type="entry name" value="PHOSPHOGLUCOMUTASE (ALPHA-D-GLUCOSE-1,6-BISPHOSPHATE-DEPENDENT)"/>
    <property type="match status" value="1"/>
</dbReference>
<dbReference type="PANTHER" id="PTHR42946">
    <property type="entry name" value="PHOSPHOHEXOSE MUTASE"/>
    <property type="match status" value="1"/>
</dbReference>
<dbReference type="Pfam" id="PF02878">
    <property type="entry name" value="PGM_PMM_I"/>
    <property type="match status" value="1"/>
</dbReference>
<dbReference type="Pfam" id="PF02879">
    <property type="entry name" value="PGM_PMM_II"/>
    <property type="match status" value="1"/>
</dbReference>
<dbReference type="Pfam" id="PF02880">
    <property type="entry name" value="PGM_PMM_III"/>
    <property type="match status" value="1"/>
</dbReference>
<dbReference type="Pfam" id="PF00408">
    <property type="entry name" value="PGM_PMM_IV"/>
    <property type="match status" value="1"/>
</dbReference>
<dbReference type="PRINTS" id="PR00509">
    <property type="entry name" value="PGMPMM"/>
</dbReference>
<dbReference type="SUPFAM" id="SSF55957">
    <property type="entry name" value="Phosphoglucomutase, C-terminal domain"/>
    <property type="match status" value="1"/>
</dbReference>
<dbReference type="SUPFAM" id="SSF53738">
    <property type="entry name" value="Phosphoglucomutase, first 3 domains"/>
    <property type="match status" value="3"/>
</dbReference>
<dbReference type="PROSITE" id="PS00710">
    <property type="entry name" value="PGM_PMM"/>
    <property type="match status" value="1"/>
</dbReference>
<organism>
    <name type="scientific">Ectopseudomonas mendocina (strain ymp)</name>
    <name type="common">Pseudomonas mendocina</name>
    <dbReference type="NCBI Taxonomy" id="399739"/>
    <lineage>
        <taxon>Bacteria</taxon>
        <taxon>Pseudomonadati</taxon>
        <taxon>Pseudomonadota</taxon>
        <taxon>Gammaproteobacteria</taxon>
        <taxon>Pseudomonadales</taxon>
        <taxon>Pseudomonadaceae</taxon>
        <taxon>Ectopseudomonas</taxon>
    </lineage>
</organism>
<name>GLMM_ECTM1</name>